<name>RIMP_LACH4</name>
<organism>
    <name type="scientific">Lactobacillus helveticus (strain DPC 4571)</name>
    <dbReference type="NCBI Taxonomy" id="405566"/>
    <lineage>
        <taxon>Bacteria</taxon>
        <taxon>Bacillati</taxon>
        <taxon>Bacillota</taxon>
        <taxon>Bacilli</taxon>
        <taxon>Lactobacillales</taxon>
        <taxon>Lactobacillaceae</taxon>
        <taxon>Lactobacillus</taxon>
    </lineage>
</organism>
<gene>
    <name evidence="1" type="primary">rimP</name>
    <name type="ordered locus">lhv_1346</name>
</gene>
<feature type="chain" id="PRO_1000073020" description="Ribosome maturation factor RimP">
    <location>
        <begin position="1"/>
        <end position="158"/>
    </location>
</feature>
<dbReference type="EMBL" id="CP000517">
    <property type="protein sequence ID" value="ABX27348.1"/>
    <property type="molecule type" value="Genomic_DNA"/>
</dbReference>
<dbReference type="RefSeq" id="WP_012212003.1">
    <property type="nucleotide sequence ID" value="NC_010080.1"/>
</dbReference>
<dbReference type="SMR" id="A8YVR1"/>
<dbReference type="KEGG" id="lhe:lhv_1346"/>
<dbReference type="eggNOG" id="COG0779">
    <property type="taxonomic scope" value="Bacteria"/>
</dbReference>
<dbReference type="HOGENOM" id="CLU_070525_2_0_9"/>
<dbReference type="Proteomes" id="UP000000790">
    <property type="component" value="Chromosome"/>
</dbReference>
<dbReference type="GO" id="GO:0005829">
    <property type="term" value="C:cytosol"/>
    <property type="evidence" value="ECO:0007669"/>
    <property type="project" value="TreeGrafter"/>
</dbReference>
<dbReference type="GO" id="GO:0000028">
    <property type="term" value="P:ribosomal small subunit assembly"/>
    <property type="evidence" value="ECO:0007669"/>
    <property type="project" value="TreeGrafter"/>
</dbReference>
<dbReference type="GO" id="GO:0006412">
    <property type="term" value="P:translation"/>
    <property type="evidence" value="ECO:0007669"/>
    <property type="project" value="TreeGrafter"/>
</dbReference>
<dbReference type="CDD" id="cd01734">
    <property type="entry name" value="YlxS_C"/>
    <property type="match status" value="1"/>
</dbReference>
<dbReference type="Gene3D" id="2.30.30.180">
    <property type="entry name" value="Ribosome maturation factor RimP, C-terminal domain"/>
    <property type="match status" value="1"/>
</dbReference>
<dbReference type="Gene3D" id="3.30.300.70">
    <property type="entry name" value="RimP-like superfamily, N-terminal"/>
    <property type="match status" value="1"/>
</dbReference>
<dbReference type="HAMAP" id="MF_01077">
    <property type="entry name" value="RimP"/>
    <property type="match status" value="1"/>
</dbReference>
<dbReference type="InterPro" id="IPR003728">
    <property type="entry name" value="Ribosome_maturation_RimP"/>
</dbReference>
<dbReference type="InterPro" id="IPR028998">
    <property type="entry name" value="RimP_C"/>
</dbReference>
<dbReference type="InterPro" id="IPR036847">
    <property type="entry name" value="RimP_C_sf"/>
</dbReference>
<dbReference type="InterPro" id="IPR028989">
    <property type="entry name" value="RimP_N"/>
</dbReference>
<dbReference type="InterPro" id="IPR035956">
    <property type="entry name" value="RimP_N_sf"/>
</dbReference>
<dbReference type="NCBIfam" id="NF000928">
    <property type="entry name" value="PRK00092.1-2"/>
    <property type="match status" value="1"/>
</dbReference>
<dbReference type="PANTHER" id="PTHR33867">
    <property type="entry name" value="RIBOSOME MATURATION FACTOR RIMP"/>
    <property type="match status" value="1"/>
</dbReference>
<dbReference type="PANTHER" id="PTHR33867:SF1">
    <property type="entry name" value="RIBOSOME MATURATION FACTOR RIMP"/>
    <property type="match status" value="1"/>
</dbReference>
<dbReference type="Pfam" id="PF17384">
    <property type="entry name" value="DUF150_C"/>
    <property type="match status" value="1"/>
</dbReference>
<dbReference type="Pfam" id="PF02576">
    <property type="entry name" value="RimP_N"/>
    <property type="match status" value="1"/>
</dbReference>
<dbReference type="SUPFAM" id="SSF74942">
    <property type="entry name" value="YhbC-like, C-terminal domain"/>
    <property type="match status" value="1"/>
</dbReference>
<dbReference type="SUPFAM" id="SSF75420">
    <property type="entry name" value="YhbC-like, N-terminal domain"/>
    <property type="match status" value="1"/>
</dbReference>
<protein>
    <recommendedName>
        <fullName evidence="1">Ribosome maturation factor RimP</fullName>
    </recommendedName>
</protein>
<reference key="1">
    <citation type="journal article" date="2008" name="J. Bacteriol.">
        <title>Genome sequence of Lactobacillus helveticus: an organism distinguished by selective gene loss and IS element expansion.</title>
        <authorList>
            <person name="Callanan M."/>
            <person name="Kaleta P."/>
            <person name="O'Callaghan J."/>
            <person name="O'Sullivan O."/>
            <person name="Jordan K."/>
            <person name="McAuliffe O."/>
            <person name="Sangrador-Vegas A."/>
            <person name="Slattery L."/>
            <person name="Fitzgerald G.F."/>
            <person name="Beresford T."/>
            <person name="Ross R.P."/>
        </authorList>
    </citation>
    <scope>NUCLEOTIDE SEQUENCE [LARGE SCALE GENOMIC DNA]</scope>
    <source>
        <strain>DPC 4571</strain>
    </source>
</reference>
<comment type="function">
    <text evidence="1">Required for maturation of 30S ribosomal subunits.</text>
</comment>
<comment type="subcellular location">
    <subcellularLocation>
        <location evidence="1">Cytoplasm</location>
    </subcellularLocation>
</comment>
<comment type="similarity">
    <text evidence="1">Belongs to the RimP family.</text>
</comment>
<accession>A8YVR1</accession>
<keyword id="KW-0963">Cytoplasm</keyword>
<keyword id="KW-0690">Ribosome biogenesis</keyword>
<sequence>MSKVVDLVRPVVETIIDEHGDMLVDMEYVKEKGQNYLRIYVDRQPNGIDIDEIAALSELVSEKLDTIDPDPLPDPYVLELSSPGAERPIKTEADWKRALNDYVHIGLYQKIDDKKVYEGTLKYYNNDEIVLEVKDKTRRKKLTIPRKLIAKIRFAIEF</sequence>
<proteinExistence type="inferred from homology"/>
<evidence type="ECO:0000255" key="1">
    <source>
        <dbReference type="HAMAP-Rule" id="MF_01077"/>
    </source>
</evidence>